<keyword id="KW-0002">3D-structure</keyword>
<keyword id="KW-0028">Amino-acid biosynthesis</keyword>
<keyword id="KW-0963">Cytoplasm</keyword>
<keyword id="KW-0413">Isomerase</keyword>
<keyword id="KW-0457">Lysine biosynthesis</keyword>
<keyword id="KW-1185">Reference proteome</keyword>
<evidence type="ECO:0000250" key="1">
    <source>
        <dbReference type="UniProtKB" id="P0A6K1"/>
    </source>
</evidence>
<evidence type="ECO:0000255" key="2">
    <source>
        <dbReference type="HAMAP-Rule" id="MF_00197"/>
    </source>
</evidence>
<evidence type="ECO:0000269" key="3">
    <source>
    </source>
</evidence>
<evidence type="ECO:0000269" key="4">
    <source>
    </source>
</evidence>
<evidence type="ECO:0000269" key="5">
    <source>
    </source>
</evidence>
<evidence type="ECO:0000269" key="6">
    <source>
    </source>
</evidence>
<evidence type="ECO:0000269" key="7">
    <source ref="3"/>
</evidence>
<evidence type="ECO:0000303" key="8">
    <source>
    </source>
</evidence>
<evidence type="ECO:0000305" key="9"/>
<evidence type="ECO:0000305" key="10">
    <source>
    </source>
</evidence>
<evidence type="ECO:0000305" key="11">
    <source>
    </source>
</evidence>
<evidence type="ECO:0000305" key="12">
    <source ref="3"/>
</evidence>
<evidence type="ECO:0007744" key="13">
    <source>
        <dbReference type="PDB" id="1BWZ"/>
    </source>
</evidence>
<evidence type="ECO:0007744" key="14">
    <source>
        <dbReference type="PDB" id="2GKE"/>
    </source>
</evidence>
<evidence type="ECO:0007744" key="15">
    <source>
        <dbReference type="PDB" id="2GKJ"/>
    </source>
</evidence>
<evidence type="ECO:0007829" key="16">
    <source>
        <dbReference type="PDB" id="2GKE"/>
    </source>
</evidence>
<feature type="chain" id="PRO_0000149842" description="Diaminopimelate epimerase">
    <location>
        <begin position="1"/>
        <end position="274"/>
    </location>
</feature>
<feature type="active site" description="Proton donor" evidence="10 11 12 13 14 15">
    <location>
        <position position="73"/>
    </location>
</feature>
<feature type="active site" description="Proton acceptor" evidence="10 11 12 13 14 15">
    <location>
        <position position="217"/>
    </location>
</feature>
<feature type="binding site" evidence="4 14 15">
    <location>
        <position position="11"/>
    </location>
    <ligand>
        <name>substrate</name>
    </ligand>
</feature>
<feature type="binding site" evidence="4 15">
    <location>
        <position position="44"/>
    </location>
    <ligand>
        <name>substrate</name>
    </ligand>
</feature>
<feature type="binding site" evidence="4 14 15">
    <location>
        <position position="64"/>
    </location>
    <ligand>
        <name>substrate</name>
    </ligand>
</feature>
<feature type="binding site" evidence="4 14 15">
    <location>
        <begin position="74"/>
        <end position="75"/>
    </location>
    <ligand>
        <name>substrate</name>
    </ligand>
</feature>
<feature type="binding site" evidence="4 14 15">
    <location>
        <position position="157"/>
    </location>
    <ligand>
        <name>substrate</name>
    </ligand>
</feature>
<feature type="binding site" evidence="4 14 15">
    <location>
        <position position="190"/>
    </location>
    <ligand>
        <name>substrate</name>
    </ligand>
</feature>
<feature type="binding site" evidence="4 14 15">
    <location>
        <begin position="208"/>
        <end position="209"/>
    </location>
    <ligand>
        <name>substrate</name>
    </ligand>
</feature>
<feature type="binding site" evidence="4 14 15">
    <location>
        <begin position="218"/>
        <end position="219"/>
    </location>
    <ligand>
        <name>substrate</name>
    </ligand>
</feature>
<feature type="site" description="Could be important to modulate the pK values of the two catalytic cysteine residues" evidence="11 13">
    <location>
        <position position="159"/>
    </location>
</feature>
<feature type="site" description="Could be important to modulate the pK values of the two catalytic cysteine residues" evidence="11 13">
    <location>
        <position position="208"/>
    </location>
</feature>
<feature type="site" description="Important for dimerization" evidence="1">
    <location>
        <position position="268"/>
    </location>
</feature>
<feature type="mutagenesis site" description="Inactive as epimerase, but it is able to rapidly catalyze the HF elimination via abstraction of the C-2 hydrogen of the D,L-3-fluoro-DAP analog and is essentially unable to catalyze the same elimination with the L,L-3-fluoro-DAP analog." evidence="7">
    <original>C</original>
    <variation>A</variation>
    <location>
        <position position="73"/>
    </location>
</feature>
<feature type="mutagenesis site" description="Enzymatically active, but it adopts a more open conformation. It is able to catalyze both epimerization of DAP and HF elimination of L,L-3-fluoro-DAP and D,L-3-fluoro-DAP. Able to slowly eliminate HF but does not catalyze epimerization; when associated with S-217." evidence="5 7">
    <original>C</original>
    <variation>S</variation>
    <location>
        <position position="73"/>
    </location>
</feature>
<feature type="mutagenesis site" description="Inactive as epimerase. It is able to rapidly catalyze the HF elimination via abstraction of the C-2 hydrogen of the L,L-3-fluoro-DAP analog and is essentially unable to catalyze the same elimination with the D,L-3-fluoro-DAP analog." evidence="7">
    <original>C</original>
    <variation>A</variation>
    <location>
        <position position="217"/>
    </location>
</feature>
<feature type="mutagenesis site" description="Enzymatically active, but it adopts a more open conformation. It is able to catalyze both epimerization of DAP and HF elimination of L,L-3-fluoro-DAP and D,L-3-fluoro-DAP. Able to slowly eliminate HF but does not catalyze epimerization; when associated with S-73." evidence="5 7">
    <original>C</original>
    <variation>S</variation>
    <location>
        <position position="217"/>
    </location>
</feature>
<feature type="strand" evidence="16">
    <location>
        <begin position="2"/>
        <end position="8"/>
    </location>
</feature>
<feature type="strand" evidence="16">
    <location>
        <begin position="11"/>
        <end position="17"/>
    </location>
</feature>
<feature type="strand" evidence="16">
    <location>
        <begin position="19"/>
        <end position="21"/>
    </location>
</feature>
<feature type="helix" evidence="16">
    <location>
        <begin position="27"/>
        <end position="34"/>
    </location>
</feature>
<feature type="turn" evidence="16">
    <location>
        <begin position="36"/>
        <end position="38"/>
    </location>
</feature>
<feature type="strand" evidence="16">
    <location>
        <begin position="43"/>
        <end position="49"/>
    </location>
</feature>
<feature type="strand" evidence="16">
    <location>
        <begin position="56"/>
        <end position="64"/>
    </location>
</feature>
<feature type="strand" evidence="16">
    <location>
        <begin position="69"/>
        <end position="71"/>
    </location>
</feature>
<feature type="helix" evidence="16">
    <location>
        <begin position="74"/>
        <end position="86"/>
    </location>
</feature>
<feature type="strand" evidence="16">
    <location>
        <begin position="93"/>
        <end position="98"/>
    </location>
</feature>
<feature type="strand" evidence="16">
    <location>
        <begin position="103"/>
        <end position="108"/>
    </location>
</feature>
<feature type="strand" evidence="16">
    <location>
        <begin position="114"/>
        <end position="117"/>
    </location>
</feature>
<feature type="helix" evidence="16">
    <location>
        <begin position="125"/>
        <end position="127"/>
    </location>
</feature>
<feature type="strand" evidence="16">
    <location>
        <begin position="137"/>
        <end position="142"/>
    </location>
</feature>
<feature type="strand" evidence="16">
    <location>
        <begin position="147"/>
        <end position="163"/>
    </location>
</feature>
<feature type="turn" evidence="16">
    <location>
        <begin position="167"/>
        <end position="169"/>
    </location>
</feature>
<feature type="helix" evidence="16">
    <location>
        <begin position="172"/>
        <end position="180"/>
    </location>
</feature>
<feature type="strand" evidence="16">
    <location>
        <begin position="190"/>
        <end position="198"/>
    </location>
</feature>
<feature type="strand" evidence="16">
    <location>
        <begin position="201"/>
        <end position="208"/>
    </location>
</feature>
<feature type="turn" evidence="16">
    <location>
        <begin position="209"/>
        <end position="211"/>
    </location>
</feature>
<feature type="helix" evidence="16">
    <location>
        <begin position="218"/>
        <end position="230"/>
    </location>
</feature>
<feature type="strand" evidence="16">
    <location>
        <begin position="236"/>
        <end position="242"/>
    </location>
</feature>
<feature type="strand" evidence="16">
    <location>
        <begin position="245"/>
        <end position="251"/>
    </location>
</feature>
<feature type="strand" evidence="16">
    <location>
        <begin position="258"/>
        <end position="262"/>
    </location>
</feature>
<feature type="strand" evidence="16">
    <location>
        <begin position="265"/>
        <end position="271"/>
    </location>
</feature>
<dbReference type="EC" id="5.1.1.7" evidence="3"/>
<dbReference type="EMBL" id="L42023">
    <property type="protein sequence ID" value="AAC22409.1"/>
    <property type="molecule type" value="Genomic_DNA"/>
</dbReference>
<dbReference type="PIR" id="F64090">
    <property type="entry name" value="F64090"/>
</dbReference>
<dbReference type="RefSeq" id="NP_438909.1">
    <property type="nucleotide sequence ID" value="NC_000907.1"/>
</dbReference>
<dbReference type="PDB" id="1BWZ">
    <property type="method" value="X-ray"/>
    <property type="resolution" value="2.72 A"/>
    <property type="chains" value="A=1-274"/>
</dbReference>
<dbReference type="PDB" id="1GQZ">
    <property type="method" value="X-ray"/>
    <property type="resolution" value="1.75 A"/>
    <property type="chains" value="A=1-274"/>
</dbReference>
<dbReference type="PDB" id="2GKE">
    <property type="method" value="X-ray"/>
    <property type="resolution" value="1.35 A"/>
    <property type="chains" value="A=1-274"/>
</dbReference>
<dbReference type="PDB" id="2GKJ">
    <property type="method" value="X-ray"/>
    <property type="resolution" value="1.70 A"/>
    <property type="chains" value="A=1-274"/>
</dbReference>
<dbReference type="PDB" id="2Q9H">
    <property type="method" value="X-ray"/>
    <property type="resolution" value="2.30 A"/>
    <property type="chains" value="A=1-274"/>
</dbReference>
<dbReference type="PDB" id="2Q9J">
    <property type="method" value="X-ray"/>
    <property type="resolution" value="2.20 A"/>
    <property type="chains" value="A=1-274"/>
</dbReference>
<dbReference type="PDBsum" id="1BWZ"/>
<dbReference type="PDBsum" id="1GQZ"/>
<dbReference type="PDBsum" id="2GKE"/>
<dbReference type="PDBsum" id="2GKJ"/>
<dbReference type="PDBsum" id="2Q9H"/>
<dbReference type="PDBsum" id="2Q9J"/>
<dbReference type="SMR" id="P44859"/>
<dbReference type="STRING" id="71421.HI_0750"/>
<dbReference type="EnsemblBacteria" id="AAC22409">
    <property type="protein sequence ID" value="AAC22409"/>
    <property type="gene ID" value="HI_0750"/>
</dbReference>
<dbReference type="KEGG" id="hin:HI_0750"/>
<dbReference type="PATRIC" id="fig|71421.8.peg.787"/>
<dbReference type="eggNOG" id="COG0253">
    <property type="taxonomic scope" value="Bacteria"/>
</dbReference>
<dbReference type="HOGENOM" id="CLU_053306_1_1_6"/>
<dbReference type="OrthoDB" id="9805408at2"/>
<dbReference type="PhylomeDB" id="P44859"/>
<dbReference type="BioCyc" id="HINF71421:G1GJ1-788-MONOMER"/>
<dbReference type="BRENDA" id="5.1.1.7">
    <property type="organism ID" value="2529"/>
</dbReference>
<dbReference type="UniPathway" id="UPA00034">
    <property type="reaction ID" value="UER00025"/>
</dbReference>
<dbReference type="EvolutionaryTrace" id="P44859"/>
<dbReference type="Proteomes" id="UP000000579">
    <property type="component" value="Chromosome"/>
</dbReference>
<dbReference type="GO" id="GO:0005829">
    <property type="term" value="C:cytosol"/>
    <property type="evidence" value="ECO:0000318"/>
    <property type="project" value="GO_Central"/>
</dbReference>
<dbReference type="GO" id="GO:0008837">
    <property type="term" value="F:diaminopimelate epimerase activity"/>
    <property type="evidence" value="ECO:0000318"/>
    <property type="project" value="GO_Central"/>
</dbReference>
<dbReference type="GO" id="GO:0009089">
    <property type="term" value="P:lysine biosynthetic process via diaminopimelate"/>
    <property type="evidence" value="ECO:0000318"/>
    <property type="project" value="GO_Central"/>
</dbReference>
<dbReference type="FunFam" id="3.10.310.10:FF:000001">
    <property type="entry name" value="Diaminopimelate epimerase"/>
    <property type="match status" value="1"/>
</dbReference>
<dbReference type="FunFam" id="3.10.310.10:FF:000002">
    <property type="entry name" value="Diaminopimelate epimerase"/>
    <property type="match status" value="1"/>
</dbReference>
<dbReference type="Gene3D" id="3.10.310.10">
    <property type="entry name" value="Diaminopimelate Epimerase, Chain A, domain 1"/>
    <property type="match status" value="2"/>
</dbReference>
<dbReference type="HAMAP" id="MF_00197">
    <property type="entry name" value="DAP_epimerase"/>
    <property type="match status" value="1"/>
</dbReference>
<dbReference type="InterPro" id="IPR018510">
    <property type="entry name" value="DAP_epimerase_AS"/>
</dbReference>
<dbReference type="InterPro" id="IPR001653">
    <property type="entry name" value="DAP_epimerase_DapF"/>
</dbReference>
<dbReference type="NCBIfam" id="TIGR00652">
    <property type="entry name" value="DapF"/>
    <property type="match status" value="1"/>
</dbReference>
<dbReference type="PANTHER" id="PTHR31689:SF0">
    <property type="entry name" value="DIAMINOPIMELATE EPIMERASE"/>
    <property type="match status" value="1"/>
</dbReference>
<dbReference type="PANTHER" id="PTHR31689">
    <property type="entry name" value="DIAMINOPIMELATE EPIMERASE, CHLOROPLASTIC"/>
    <property type="match status" value="1"/>
</dbReference>
<dbReference type="Pfam" id="PF01678">
    <property type="entry name" value="DAP_epimerase"/>
    <property type="match status" value="2"/>
</dbReference>
<dbReference type="SUPFAM" id="SSF54506">
    <property type="entry name" value="Diaminopimelate epimerase-like"/>
    <property type="match status" value="1"/>
</dbReference>
<dbReference type="PROSITE" id="PS01326">
    <property type="entry name" value="DAP_EPIMERASE"/>
    <property type="match status" value="1"/>
</dbReference>
<organism>
    <name type="scientific">Haemophilus influenzae (strain ATCC 51907 / DSM 11121 / KW20 / Rd)</name>
    <dbReference type="NCBI Taxonomy" id="71421"/>
    <lineage>
        <taxon>Bacteria</taxon>
        <taxon>Pseudomonadati</taxon>
        <taxon>Pseudomonadota</taxon>
        <taxon>Gammaproteobacteria</taxon>
        <taxon>Pasteurellales</taxon>
        <taxon>Pasteurellaceae</taxon>
        <taxon>Haemophilus</taxon>
    </lineage>
</organism>
<accession>P44859</accession>
<gene>
    <name evidence="8" type="primary">dapF</name>
    <name type="ordered locus">HI_0750</name>
</gene>
<proteinExistence type="evidence at protein level"/>
<reference key="1">
    <citation type="journal article" date="1995" name="Science">
        <title>Whole-genome random sequencing and assembly of Haemophilus influenzae Rd.</title>
        <authorList>
            <person name="Fleischmann R.D."/>
            <person name="Adams M.D."/>
            <person name="White O."/>
            <person name="Clayton R.A."/>
            <person name="Kirkness E.F."/>
            <person name="Kerlavage A.R."/>
            <person name="Bult C.J."/>
            <person name="Tomb J.-F."/>
            <person name="Dougherty B.A."/>
            <person name="Merrick J.M."/>
            <person name="McKenney K."/>
            <person name="Sutton G.G."/>
            <person name="FitzHugh W."/>
            <person name="Fields C.A."/>
            <person name="Gocayne J.D."/>
            <person name="Scott J.D."/>
            <person name="Shirley R."/>
            <person name="Liu L.-I."/>
            <person name="Glodek A."/>
            <person name="Kelley J.M."/>
            <person name="Weidman J.F."/>
            <person name="Phillips C.A."/>
            <person name="Spriggs T."/>
            <person name="Hedblom E."/>
            <person name="Cotton M.D."/>
            <person name="Utterback T.R."/>
            <person name="Hanna M.C."/>
            <person name="Nguyen D.T."/>
            <person name="Saudek D.M."/>
            <person name="Brandon R.C."/>
            <person name="Fine L.D."/>
            <person name="Fritchman J.L."/>
            <person name="Fuhrmann J.L."/>
            <person name="Geoghagen N.S.M."/>
            <person name="Gnehm C.L."/>
            <person name="McDonald L.A."/>
            <person name="Small K.V."/>
            <person name="Fraser C.M."/>
            <person name="Smith H.O."/>
            <person name="Venter J.C."/>
        </authorList>
    </citation>
    <scope>NUCLEOTIDE SEQUENCE [LARGE SCALE GENOMIC DNA]</scope>
    <source>
        <strain>ATCC 51907 / DSM 11121 / KW20 / Rd</strain>
    </source>
</reference>
<reference key="2">
    <citation type="journal article" date="1999" name="Biochemistry">
        <title>Chemical mechanism of Haemophilus influenzae diaminopimelate epimerase.</title>
        <authorList>
            <person name="Koo C.W."/>
            <person name="Blanchard J.S."/>
        </authorList>
    </citation>
    <scope>FUNCTION</scope>
    <scope>CATALYTIC ACTIVITY</scope>
    <scope>REACTION MECHANISM</scope>
    <scope>BIOPHYSICOCHEMICAL PROPERTIES</scope>
</reference>
<reference key="3">
    <citation type="journal article" date="2000" name="J. Am. Chem. Soc.">
        <title>Identification of active site cysteine residues that function as general bases: diaminopimelate epimerase.</title>
        <authorList>
            <person name="Koo C.W."/>
            <person name="Sutherland A."/>
            <person name="Vederas J.C."/>
            <person name="Blanchard J.S."/>
        </authorList>
    </citation>
    <scope>MUTAGENESIS OF CYS-73 AND CYS-217</scope>
    <scope>ACTIVE SITE</scope>
    <scope>ACTIVITY REGULATION</scope>
</reference>
<reference key="4">
    <citation type="journal article" date="1998" name="Biochemistry">
        <title>Structural symmetry: the three-dimensional structure of Haemophilus influenzae diaminopimelate epimerase.</title>
        <authorList>
            <person name="Cirilli M."/>
            <person name="Zheng R."/>
            <person name="Scapin G."/>
            <person name="Blanchard J.S."/>
        </authorList>
    </citation>
    <scope>X-RAY CRYSTALLOGRAPHY (2.72 ANGSTROMS)</scope>
    <scope>ACTIVE SITE</scope>
    <scope>SUBUNIT</scope>
</reference>
<reference key="5">
    <citation type="journal article" date="2004" name="Acta Crystallogr. D">
        <title>Refinement of Haemophilus influenzae diaminopimelic acid epimerase (DapF) at 1.75 A resolution suggests a mechanism for stereocontrol during catalysis.</title>
        <authorList>
            <person name="Lloyd A.J."/>
            <person name="Huyton T."/>
            <person name="Turkenburg J."/>
            <person name="Roper D.I."/>
        </authorList>
    </citation>
    <scope>X-RAY CRYSTALLOGRAPHY (1.75 ANGSTROMS)</scope>
    <scope>REACTION MECHANISM</scope>
</reference>
<reference key="6">
    <citation type="journal article" date="2006" name="Proc. Natl. Acad. Sci. U.S.A.">
        <title>Structural insights into stereochemical inversion by diaminopimelate epimerase: an antibacterial drug target.</title>
        <authorList>
            <person name="Pillai B."/>
            <person name="Cherney M.M."/>
            <person name="Diaper C.M."/>
            <person name="Sutherland A."/>
            <person name="Blanchard J.S."/>
            <person name="Vederas J.C."/>
            <person name="James M.N."/>
        </authorList>
    </citation>
    <scope>X-RAY CRYSTALLOGRAPHY (1.35 ANGSTROMS) IN COMPLEX WITH SUBSTRATE ANALOGS</scope>
    <scope>FUNCTION</scope>
    <scope>SUBSTRATE SPECIFICITY</scope>
    <scope>ACTIVITY REGULATION</scope>
    <scope>ACTIVE SITE</scope>
    <scope>REACTION MECHANISM</scope>
</reference>
<reference key="7">
    <citation type="journal article" date="2007" name="Biochem. Biophys. Res. Commun.">
        <title>Dynamics of catalysis revealed from the crystal structures of mutants of diaminopimelate epimerase.</title>
        <authorList>
            <person name="Pillai B."/>
            <person name="Cherney M."/>
            <person name="Diaper C.M."/>
            <person name="Sutherland A."/>
            <person name="Blanchard J.S."/>
            <person name="Vederas J.C."/>
            <person name="James M.N."/>
        </authorList>
    </citation>
    <scope>X-RAY CRYSTALLOGRAPHY (2.20 ANGSTROMS) OF MUTANT SER-73 AND SER-217</scope>
    <scope>MUTAGENESIS OF CYS-73 AND CYS-217</scope>
    <scope>SUBUNIT</scope>
</reference>
<protein>
    <recommendedName>
        <fullName evidence="8">Diaminopimelate epimerase</fullName>
        <shortName evidence="8">DAP epimerase</shortName>
        <ecNumber evidence="3">5.1.1.7</ecNumber>
    </recommendedName>
    <alternativeName>
        <fullName evidence="8">PLP-independent amino acid racemase</fullName>
    </alternativeName>
</protein>
<name>DAPF_HAEIN</name>
<comment type="function">
    <text evidence="3 4">Catalyzes the stereoinversion of LL-2,6-diaminopimelate (L,L-DAP) to meso-diaminopimelate (meso-DAP), a precursor of L-lysine and an essential component of the bacterial peptidoglycan (PubMed:10194362, PubMed:16723397). Only accepts DAP isomers with the L configuration (PubMed:16723397).</text>
</comment>
<comment type="catalytic activity">
    <reaction evidence="3">
        <text>(2S,6S)-2,6-diaminopimelate = meso-2,6-diaminopimelate</text>
        <dbReference type="Rhea" id="RHEA:15393"/>
        <dbReference type="ChEBI" id="CHEBI:57609"/>
        <dbReference type="ChEBI" id="CHEBI:57791"/>
        <dbReference type="EC" id="5.1.1.7"/>
    </reaction>
</comment>
<comment type="activity regulation">
    <text evidence="4 7">Inhibited by LL-aziridino (LL-AziDAP), DL-aziridino (DL-AziDAP) (PubMed:16723397). Also inhibited by (2S,3R,6S)-2,6-diamino-3-fluoropimelate (L,L-3-fluoro-DAP) and (2R,3S,6S)-2,6-diamino-3-fluoropimelate (D,L-3-fluoro-DAP) (Ref.3).</text>
</comment>
<comment type="biophysicochemical properties">
    <kinetics>
        <KM evidence="3">0.7 mM for L,L-DAP (at pH 7.8)</KM>
        <KM evidence="3">1.1 mM for D,L-DAP (at pH 7.8)</KM>
        <text evidence="3">kcat is 128 and 82 sec(-1) for L,L-DAP and D,L-DAP, respectively.</text>
    </kinetics>
</comment>
<comment type="pathway">
    <text evidence="9">Amino-acid biosynthesis; L-lysine biosynthesis via DAP pathway; DL-2,6-diaminopimelate from LL-2,6-diaminopimelate: step 1/1.</text>
</comment>
<comment type="subunit">
    <text evidence="2 5 6">Homodimer (Potential). Previously DapF has been proposed to be a monomer, however it seems that it adopts a dimeric structure (PubMed:17889830, PubMed:9843410).</text>
</comment>
<comment type="subcellular location">
    <subcellularLocation>
        <location evidence="9">Cytoplasm</location>
    </subcellularLocation>
</comment>
<comment type="miscellaneous">
    <text evidence="4">DapF utilizes a two-base mechanism involving a pair of cysteine residues (Cys-73 and Cys-217).</text>
</comment>
<comment type="similarity">
    <text evidence="9">Belongs to the diaminopimelate epimerase family.</text>
</comment>
<sequence>MQFSKMHGLGNDFVVVDGVTQNVFFTPETIRRLANRHCGIGFDQLLIVEAPYDPELDFHYRIFNADGSEVSQCGNGARCFARFVTLKGLTNKKDISVSTQKGNMVLTVKDDNQIRVNMGEPIWEPAKIPFTANKFEKNYILRTDIQTVLCGAVSMGNPHCVVQVDDIQTANVEQLGPLLESHERFPERVNAGFMQIINKEHIKLRVYERGAGETQACGSGACAAVAVGIMQGLLNNNVQVDLPGGSLMIEWNGVGHPLYMTGEATHIYDGFITL</sequence>